<reference key="1">
    <citation type="journal article" date="2006" name="Proc. Natl. Acad. Sci. U.S.A.">
        <title>Genomic analysis of the uncultivated marine crenarchaeote Cenarchaeum symbiosum.</title>
        <authorList>
            <person name="Hallam S.J."/>
            <person name="Konstantinidis K.T."/>
            <person name="Putnam N."/>
            <person name="Schleper C."/>
            <person name="Watanabe Y."/>
            <person name="Sugahara J."/>
            <person name="Preston C."/>
            <person name="de la Torre J."/>
            <person name="Richardson P.M."/>
            <person name="DeLong E.F."/>
        </authorList>
    </citation>
    <scope>NUCLEOTIDE SEQUENCE [LARGE SCALE GENOMIC DNA]</scope>
    <source>
        <strain>A</strain>
    </source>
</reference>
<dbReference type="EC" id="3.1.13.-" evidence="1"/>
<dbReference type="EMBL" id="DP000238">
    <property type="protein sequence ID" value="ABK78158.1"/>
    <property type="molecule type" value="Genomic_DNA"/>
</dbReference>
<dbReference type="SMR" id="A0RXU1"/>
<dbReference type="STRING" id="414004.CENSYa_1536"/>
<dbReference type="EnsemblBacteria" id="ABK78158">
    <property type="protein sequence ID" value="ABK78158"/>
    <property type="gene ID" value="CENSYa_1536"/>
</dbReference>
<dbReference type="KEGG" id="csy:CENSYa_1536"/>
<dbReference type="PATRIC" id="fig|414004.10.peg.1409"/>
<dbReference type="HOGENOM" id="CLU_063514_0_0_2"/>
<dbReference type="Proteomes" id="UP000000758">
    <property type="component" value="Chromosome"/>
</dbReference>
<dbReference type="GO" id="GO:0000177">
    <property type="term" value="C:cytoplasmic exosome (RNase complex)"/>
    <property type="evidence" value="ECO:0007669"/>
    <property type="project" value="TreeGrafter"/>
</dbReference>
<dbReference type="GO" id="GO:0000175">
    <property type="term" value="F:3'-5'-RNA exonuclease activity"/>
    <property type="evidence" value="ECO:0007669"/>
    <property type="project" value="UniProtKB-UniRule"/>
</dbReference>
<dbReference type="GO" id="GO:0003723">
    <property type="term" value="F:RNA binding"/>
    <property type="evidence" value="ECO:0007669"/>
    <property type="project" value="TreeGrafter"/>
</dbReference>
<dbReference type="GO" id="GO:0010467">
    <property type="term" value="P:gene expression"/>
    <property type="evidence" value="ECO:0007669"/>
    <property type="project" value="UniProtKB-ARBA"/>
</dbReference>
<dbReference type="GO" id="GO:0016075">
    <property type="term" value="P:rRNA catabolic process"/>
    <property type="evidence" value="ECO:0007669"/>
    <property type="project" value="TreeGrafter"/>
</dbReference>
<dbReference type="CDD" id="cd11366">
    <property type="entry name" value="RNase_PH_archRRP41"/>
    <property type="match status" value="1"/>
</dbReference>
<dbReference type="FunFam" id="3.30.230.70:FF:000004">
    <property type="entry name" value="Exosome complex component Rrp41"/>
    <property type="match status" value="1"/>
</dbReference>
<dbReference type="Gene3D" id="3.30.230.70">
    <property type="entry name" value="GHMP Kinase, N-terminal domain"/>
    <property type="match status" value="1"/>
</dbReference>
<dbReference type="HAMAP" id="MF_00591">
    <property type="entry name" value="Exosome_Rrp41"/>
    <property type="match status" value="1"/>
</dbReference>
<dbReference type="InterPro" id="IPR001247">
    <property type="entry name" value="ExoRNase_PH_dom1"/>
</dbReference>
<dbReference type="InterPro" id="IPR015847">
    <property type="entry name" value="ExoRNase_PH_dom2"/>
</dbReference>
<dbReference type="InterPro" id="IPR036345">
    <property type="entry name" value="ExoRNase_PH_dom2_sf"/>
</dbReference>
<dbReference type="InterPro" id="IPR027408">
    <property type="entry name" value="PNPase/RNase_PH_dom_sf"/>
</dbReference>
<dbReference type="InterPro" id="IPR020568">
    <property type="entry name" value="Ribosomal_Su5_D2-typ_SF"/>
</dbReference>
<dbReference type="InterPro" id="IPR050080">
    <property type="entry name" value="RNase_PH"/>
</dbReference>
<dbReference type="InterPro" id="IPR011807">
    <property type="entry name" value="Rrp41"/>
</dbReference>
<dbReference type="NCBIfam" id="TIGR02065">
    <property type="entry name" value="ECX1"/>
    <property type="match status" value="1"/>
</dbReference>
<dbReference type="PANTHER" id="PTHR11953">
    <property type="entry name" value="EXOSOME COMPLEX COMPONENT"/>
    <property type="match status" value="1"/>
</dbReference>
<dbReference type="PANTHER" id="PTHR11953:SF0">
    <property type="entry name" value="EXOSOME COMPLEX COMPONENT RRP41"/>
    <property type="match status" value="1"/>
</dbReference>
<dbReference type="Pfam" id="PF01138">
    <property type="entry name" value="RNase_PH"/>
    <property type="match status" value="1"/>
</dbReference>
<dbReference type="Pfam" id="PF03725">
    <property type="entry name" value="RNase_PH_C"/>
    <property type="match status" value="1"/>
</dbReference>
<dbReference type="SUPFAM" id="SSF55666">
    <property type="entry name" value="Ribonuclease PH domain 2-like"/>
    <property type="match status" value="1"/>
</dbReference>
<dbReference type="SUPFAM" id="SSF54211">
    <property type="entry name" value="Ribosomal protein S5 domain 2-like"/>
    <property type="match status" value="1"/>
</dbReference>
<evidence type="ECO:0000255" key="1">
    <source>
        <dbReference type="HAMAP-Rule" id="MF_00591"/>
    </source>
</evidence>
<organism>
    <name type="scientific">Cenarchaeum symbiosum (strain A)</name>
    <dbReference type="NCBI Taxonomy" id="414004"/>
    <lineage>
        <taxon>Archaea</taxon>
        <taxon>Nitrososphaerota</taxon>
        <taxon>Candidatus Cenarchaeales</taxon>
        <taxon>Candidatus Cenarchaeaceae</taxon>
        <taxon>Candidatus Cenarchaeum</taxon>
    </lineage>
</organism>
<keyword id="KW-0963">Cytoplasm</keyword>
<keyword id="KW-0269">Exonuclease</keyword>
<keyword id="KW-0271">Exosome</keyword>
<keyword id="KW-0378">Hydrolase</keyword>
<keyword id="KW-0540">Nuclease</keyword>
<keyword id="KW-1185">Reference proteome</keyword>
<accession>A0RXU1</accession>
<comment type="function">
    <text evidence="1">Catalytic component of the exosome, which is a complex involved in RNA degradation. Has 3'-&gt;5' exoribonuclease activity. Can also synthesize heteromeric RNA-tails.</text>
</comment>
<comment type="subunit">
    <text evidence="1">Component of the archaeal exosome complex. Forms a hexameric ring-like arrangement composed of 3 Rrp41-Rrp42 heterodimers. The hexameric ring associates with a trimer of Rrp4 and/or Csl4 subunits.</text>
</comment>
<comment type="subcellular location">
    <subcellularLocation>
        <location evidence="1">Cytoplasm</location>
    </subcellularLocation>
</comment>
<comment type="similarity">
    <text evidence="1">Belongs to the RNase PH family. Rrp41 subfamily.</text>
</comment>
<protein>
    <recommendedName>
        <fullName evidence="1">Exosome complex component Rrp41</fullName>
        <ecNumber evidence="1">3.1.13.-</ecNumber>
    </recommendedName>
</protein>
<name>RRP41_CENSY</name>
<gene>
    <name evidence="1" type="primary">rrp41</name>
    <name type="ordered locus">CENSYa_1536</name>
</gene>
<proteinExistence type="inferred from homology"/>
<sequence>MGGRDTDVVLLDENGIRCDGRKISETRRVEITAGVLNNANGSAYIEFGDNKILAGIFGPRDVHPKHMVRTETGILRCRYHMSPFSVSERKKPAPSRREIEISKVIKEALEPSLMLEQFPRTAVDVFIEVLQADGGSRCAALAAASVALADAGIPMRDMVSACAAGKVADTIVLDVNNEEDQAGQADMPVGYMPNLDQVTLIQLDGVLTPDEYSRCAAMAIDGCKQVYEVQKKALSDRFFGGGE</sequence>
<feature type="chain" id="PRO_1000212170" description="Exosome complex component Rrp41">
    <location>
        <begin position="1"/>
        <end position="243"/>
    </location>
</feature>